<dbReference type="EMBL" id="AP007281">
    <property type="protein sequence ID" value="BAG25024.1"/>
    <property type="molecule type" value="Genomic_DNA"/>
</dbReference>
<dbReference type="RefSeq" id="WP_003667618.1">
    <property type="nucleotide sequence ID" value="NC_010609.1"/>
</dbReference>
<dbReference type="SMR" id="B2G6E2"/>
<dbReference type="KEGG" id="lrf:LAR_0508"/>
<dbReference type="HOGENOM" id="CLU_030805_9_3_9"/>
<dbReference type="CDD" id="cd00885">
    <property type="entry name" value="cinA"/>
    <property type="match status" value="1"/>
</dbReference>
<dbReference type="Gene3D" id="3.90.950.20">
    <property type="entry name" value="CinA-like"/>
    <property type="match status" value="1"/>
</dbReference>
<dbReference type="Gene3D" id="3.40.980.10">
    <property type="entry name" value="MoaB/Mog-like domain"/>
    <property type="match status" value="1"/>
</dbReference>
<dbReference type="HAMAP" id="MF_00226_B">
    <property type="entry name" value="CinA_B"/>
    <property type="match status" value="1"/>
</dbReference>
<dbReference type="InterPro" id="IPR050101">
    <property type="entry name" value="CinA"/>
</dbReference>
<dbReference type="InterPro" id="IPR036653">
    <property type="entry name" value="CinA-like_C"/>
</dbReference>
<dbReference type="InterPro" id="IPR008136">
    <property type="entry name" value="CinA_C"/>
</dbReference>
<dbReference type="InterPro" id="IPR041424">
    <property type="entry name" value="CinA_KH"/>
</dbReference>
<dbReference type="InterPro" id="IPR008135">
    <property type="entry name" value="Competence-induced_CinA"/>
</dbReference>
<dbReference type="InterPro" id="IPR036425">
    <property type="entry name" value="MoaB/Mog-like_dom_sf"/>
</dbReference>
<dbReference type="InterPro" id="IPR001453">
    <property type="entry name" value="MoaB/Mog_dom"/>
</dbReference>
<dbReference type="NCBIfam" id="TIGR00200">
    <property type="entry name" value="cinA_nterm"/>
    <property type="match status" value="1"/>
</dbReference>
<dbReference type="NCBIfam" id="TIGR00199">
    <property type="entry name" value="PncC_domain"/>
    <property type="match status" value="1"/>
</dbReference>
<dbReference type="NCBIfam" id="NF001813">
    <property type="entry name" value="PRK00549.1"/>
    <property type="match status" value="1"/>
</dbReference>
<dbReference type="PANTHER" id="PTHR13939">
    <property type="entry name" value="NICOTINAMIDE-NUCLEOTIDE AMIDOHYDROLASE PNCC"/>
    <property type="match status" value="1"/>
</dbReference>
<dbReference type="PANTHER" id="PTHR13939:SF0">
    <property type="entry name" value="NMN AMIDOHYDROLASE-LIKE PROTEIN YFAY"/>
    <property type="match status" value="1"/>
</dbReference>
<dbReference type="Pfam" id="PF02464">
    <property type="entry name" value="CinA"/>
    <property type="match status" value="1"/>
</dbReference>
<dbReference type="Pfam" id="PF18146">
    <property type="entry name" value="CinA_KH"/>
    <property type="match status" value="1"/>
</dbReference>
<dbReference type="Pfam" id="PF00994">
    <property type="entry name" value="MoCF_biosynth"/>
    <property type="match status" value="1"/>
</dbReference>
<dbReference type="PIRSF" id="PIRSF006728">
    <property type="entry name" value="CinA"/>
    <property type="match status" value="1"/>
</dbReference>
<dbReference type="SMART" id="SM00852">
    <property type="entry name" value="MoCF_biosynth"/>
    <property type="match status" value="1"/>
</dbReference>
<dbReference type="SUPFAM" id="SSF142433">
    <property type="entry name" value="CinA-like"/>
    <property type="match status" value="1"/>
</dbReference>
<dbReference type="SUPFAM" id="SSF53218">
    <property type="entry name" value="Molybdenum cofactor biosynthesis proteins"/>
    <property type="match status" value="1"/>
</dbReference>
<proteinExistence type="inferred from homology"/>
<accession>B2G6E2</accession>
<gene>
    <name evidence="1" type="primary">cinA</name>
    <name type="ordered locus">LAR_0508</name>
</gene>
<evidence type="ECO:0000255" key="1">
    <source>
        <dbReference type="HAMAP-Rule" id="MF_00226"/>
    </source>
</evidence>
<organism>
    <name type="scientific">Limosilactobacillus reuteri subsp. reuteri (strain JCM 1112)</name>
    <name type="common">Lactobacillus reuteri</name>
    <dbReference type="NCBI Taxonomy" id="557433"/>
    <lineage>
        <taxon>Bacteria</taxon>
        <taxon>Bacillati</taxon>
        <taxon>Bacillota</taxon>
        <taxon>Bacilli</taxon>
        <taxon>Lactobacillales</taxon>
        <taxon>Lactobacillaceae</taxon>
        <taxon>Limosilactobacillus</taxon>
    </lineage>
</organism>
<protein>
    <recommendedName>
        <fullName evidence="1">Putative competence-damage inducible protein</fullName>
    </recommendedName>
</protein>
<sequence length="415" mass="45373">MDAEIISVGTEIVLGQIINTNAAYLANRLTQLDLPATYQTTVDDQSQRLERVINHALTRAQLVFVCGGLGPTADDITMPTVAKTLGKELQTDEEHWKWIQKTFEQRQIKMEPENIRQAQYPRGGEPLANPVGLALGCWYETKGKVVVVLPGPPAEFKAMVEKSLVPKLQQYFQTRKQITSRTLNFLGRPESQLMDEIEGATNDIPGISITSYVQPTAIQVRLTVRDLPVIEAEEKIDQAQKAILAVEEPFFFGVGDDLTLAKVVVEQLKKRGWKLTAAESLTGGMFQSAICSVPGASTVFNGGFVTYAASAKEKLLGIPHATIDRYGVVSSETAATMAEGCQRKLNVEVGIGFTGVAGPDMLEGQPAGTVWIGLAMKGRSTKTVQLHLASYVGRQAIRTLSVQYGLQLIYHELKK</sequence>
<comment type="similarity">
    <text evidence="1">Belongs to the CinA family.</text>
</comment>
<feature type="chain" id="PRO_1000100324" description="Putative competence-damage inducible protein">
    <location>
        <begin position="1"/>
        <end position="415"/>
    </location>
</feature>
<name>CINA_LIMRJ</name>
<reference key="1">
    <citation type="journal article" date="2008" name="DNA Res.">
        <title>Comparative genome analysis of Lactobacillus reuteri and Lactobacillus fermentum reveal a genomic island for reuterin and cobalamin production.</title>
        <authorList>
            <person name="Morita H."/>
            <person name="Toh H."/>
            <person name="Fukuda S."/>
            <person name="Horikawa H."/>
            <person name="Oshima K."/>
            <person name="Suzuki T."/>
            <person name="Murakami M."/>
            <person name="Hisamatsu S."/>
            <person name="Kato Y."/>
            <person name="Takizawa T."/>
            <person name="Fukuoka H."/>
            <person name="Yoshimura T."/>
            <person name="Itoh K."/>
            <person name="O'Sullivan D.J."/>
            <person name="McKay L.L."/>
            <person name="Ohno H."/>
            <person name="Kikuchi J."/>
            <person name="Masaoka T."/>
            <person name="Hattori M."/>
        </authorList>
    </citation>
    <scope>NUCLEOTIDE SEQUENCE [LARGE SCALE GENOMIC DNA]</scope>
    <source>
        <strain>JCM 1112</strain>
    </source>
</reference>